<feature type="chain" id="PRO_0000337056" description="Putative phosphatidylinositol 3,4,5-trisphosphate 3-phosphatase TPTE2P1">
    <location>
        <begin position="1"/>
        <end position="138"/>
    </location>
</feature>
<feature type="domain" description="C2 tensin-type" evidence="1">
    <location>
        <begin position="1"/>
        <end position="75"/>
    </location>
</feature>
<feature type="splice variant" id="VSP_033857" description="In isoform 2." evidence="2">
    <location>
        <begin position="74"/>
        <end position="103"/>
    </location>
</feature>
<feature type="sequence conflict" description="In Ref. 1; BAG59891." evidence="3" ref="1">
    <original>I</original>
    <variation>V</variation>
    <location>
        <position position="70"/>
    </location>
</feature>
<keyword id="KW-0025">Alternative splicing</keyword>
<keyword id="KW-1185">Reference proteome</keyword>
<name>TPT2L_HUMAN</name>
<organism>
    <name type="scientific">Homo sapiens</name>
    <name type="common">Human</name>
    <dbReference type="NCBI Taxonomy" id="9606"/>
    <lineage>
        <taxon>Eukaryota</taxon>
        <taxon>Metazoa</taxon>
        <taxon>Chordata</taxon>
        <taxon>Craniata</taxon>
        <taxon>Vertebrata</taxon>
        <taxon>Euteleostomi</taxon>
        <taxon>Mammalia</taxon>
        <taxon>Eutheria</taxon>
        <taxon>Euarchontoglires</taxon>
        <taxon>Primates</taxon>
        <taxon>Haplorrhini</taxon>
        <taxon>Catarrhini</taxon>
        <taxon>Hominidae</taxon>
        <taxon>Homo</taxon>
    </lineage>
</organism>
<evidence type="ECO:0000255" key="1">
    <source>
        <dbReference type="PROSITE-ProRule" id="PRU00589"/>
    </source>
</evidence>
<evidence type="ECO:0000303" key="2">
    <source>
    </source>
</evidence>
<evidence type="ECO:0000305" key="3"/>
<comment type="alternative products">
    <event type="alternative splicing"/>
    <isoform>
        <id>Q5T6R2-1</id>
        <name>1</name>
        <sequence type="displayed"/>
    </isoform>
    <isoform>
        <id>Q5T6R2-2</id>
        <name>2</name>
        <sequence type="described" ref="VSP_033857"/>
    </isoform>
</comment>
<comment type="caution">
    <text evidence="3">Could be the product of a pseudogene.</text>
</comment>
<reference key="1">
    <citation type="journal article" date="2004" name="Nat. Genet.">
        <title>Complete sequencing and characterization of 21,243 full-length human cDNAs.</title>
        <authorList>
            <person name="Ota T."/>
            <person name="Suzuki Y."/>
            <person name="Nishikawa T."/>
            <person name="Otsuki T."/>
            <person name="Sugiyama T."/>
            <person name="Irie R."/>
            <person name="Wakamatsu A."/>
            <person name="Hayashi K."/>
            <person name="Sato H."/>
            <person name="Nagai K."/>
            <person name="Kimura K."/>
            <person name="Makita H."/>
            <person name="Sekine M."/>
            <person name="Obayashi M."/>
            <person name="Nishi T."/>
            <person name="Shibahara T."/>
            <person name="Tanaka T."/>
            <person name="Ishii S."/>
            <person name="Yamamoto J."/>
            <person name="Saito K."/>
            <person name="Kawai Y."/>
            <person name="Isono Y."/>
            <person name="Nakamura Y."/>
            <person name="Nagahari K."/>
            <person name="Murakami K."/>
            <person name="Yasuda T."/>
            <person name="Iwayanagi T."/>
            <person name="Wagatsuma M."/>
            <person name="Shiratori A."/>
            <person name="Sudo H."/>
            <person name="Hosoiri T."/>
            <person name="Kaku Y."/>
            <person name="Kodaira H."/>
            <person name="Kondo H."/>
            <person name="Sugawara M."/>
            <person name="Takahashi M."/>
            <person name="Kanda K."/>
            <person name="Yokoi T."/>
            <person name="Furuya T."/>
            <person name="Kikkawa E."/>
            <person name="Omura Y."/>
            <person name="Abe K."/>
            <person name="Kamihara K."/>
            <person name="Katsuta N."/>
            <person name="Sato K."/>
            <person name="Tanikawa M."/>
            <person name="Yamazaki M."/>
            <person name="Ninomiya K."/>
            <person name="Ishibashi T."/>
            <person name="Yamashita H."/>
            <person name="Murakawa K."/>
            <person name="Fujimori K."/>
            <person name="Tanai H."/>
            <person name="Kimata M."/>
            <person name="Watanabe M."/>
            <person name="Hiraoka S."/>
            <person name="Chiba Y."/>
            <person name="Ishida S."/>
            <person name="Ono Y."/>
            <person name="Takiguchi S."/>
            <person name="Watanabe S."/>
            <person name="Yosida M."/>
            <person name="Hotuta T."/>
            <person name="Kusano J."/>
            <person name="Kanehori K."/>
            <person name="Takahashi-Fujii A."/>
            <person name="Hara H."/>
            <person name="Tanase T.-O."/>
            <person name="Nomura Y."/>
            <person name="Togiya S."/>
            <person name="Komai F."/>
            <person name="Hara R."/>
            <person name="Takeuchi K."/>
            <person name="Arita M."/>
            <person name="Imose N."/>
            <person name="Musashino K."/>
            <person name="Yuuki H."/>
            <person name="Oshima A."/>
            <person name="Sasaki N."/>
            <person name="Aotsuka S."/>
            <person name="Yoshikawa Y."/>
            <person name="Matsunawa H."/>
            <person name="Ichihara T."/>
            <person name="Shiohata N."/>
            <person name="Sano S."/>
            <person name="Moriya S."/>
            <person name="Momiyama H."/>
            <person name="Satoh N."/>
            <person name="Takami S."/>
            <person name="Terashima Y."/>
            <person name="Suzuki O."/>
            <person name="Nakagawa S."/>
            <person name="Senoh A."/>
            <person name="Mizoguchi H."/>
            <person name="Goto Y."/>
            <person name="Shimizu F."/>
            <person name="Wakebe H."/>
            <person name="Hishigaki H."/>
            <person name="Watanabe T."/>
            <person name="Sugiyama A."/>
            <person name="Takemoto M."/>
            <person name="Kawakami B."/>
            <person name="Yamazaki M."/>
            <person name="Watanabe K."/>
            <person name="Kumagai A."/>
            <person name="Itakura S."/>
            <person name="Fukuzumi Y."/>
            <person name="Fujimori Y."/>
            <person name="Komiyama M."/>
            <person name="Tashiro H."/>
            <person name="Tanigami A."/>
            <person name="Fujiwara T."/>
            <person name="Ono T."/>
            <person name="Yamada K."/>
            <person name="Fujii Y."/>
            <person name="Ozaki K."/>
            <person name="Hirao M."/>
            <person name="Ohmori Y."/>
            <person name="Kawabata A."/>
            <person name="Hikiji T."/>
            <person name="Kobatake N."/>
            <person name="Inagaki H."/>
            <person name="Ikema Y."/>
            <person name="Okamoto S."/>
            <person name="Okitani R."/>
            <person name="Kawakami T."/>
            <person name="Noguchi S."/>
            <person name="Itoh T."/>
            <person name="Shigeta K."/>
            <person name="Senba T."/>
            <person name="Matsumura K."/>
            <person name="Nakajima Y."/>
            <person name="Mizuno T."/>
            <person name="Morinaga M."/>
            <person name="Sasaki M."/>
            <person name="Togashi T."/>
            <person name="Oyama M."/>
            <person name="Hata H."/>
            <person name="Watanabe M."/>
            <person name="Komatsu T."/>
            <person name="Mizushima-Sugano J."/>
            <person name="Satoh T."/>
            <person name="Shirai Y."/>
            <person name="Takahashi Y."/>
            <person name="Nakagawa K."/>
            <person name="Okumura K."/>
            <person name="Nagase T."/>
            <person name="Nomura N."/>
            <person name="Kikuchi H."/>
            <person name="Masuho Y."/>
            <person name="Yamashita R."/>
            <person name="Nakai K."/>
            <person name="Yada T."/>
            <person name="Nakamura Y."/>
            <person name="Ohara O."/>
            <person name="Isogai T."/>
            <person name="Sugano S."/>
        </authorList>
    </citation>
    <scope>NUCLEOTIDE SEQUENCE [LARGE SCALE MRNA] (ISOFORMS 1 AND 2)</scope>
    <source>
        <tissue>Brain</tissue>
        <tissue>Cerebellum</tissue>
    </source>
</reference>
<reference key="2">
    <citation type="journal article" date="2004" name="Nature">
        <title>The DNA sequence and analysis of human chromosome 13.</title>
        <authorList>
            <person name="Dunham A."/>
            <person name="Matthews L.H."/>
            <person name="Burton J."/>
            <person name="Ashurst J.L."/>
            <person name="Howe K.L."/>
            <person name="Ashcroft K.J."/>
            <person name="Beare D.M."/>
            <person name="Burford D.C."/>
            <person name="Hunt S.E."/>
            <person name="Griffiths-Jones S."/>
            <person name="Jones M.C."/>
            <person name="Keenan S.J."/>
            <person name="Oliver K."/>
            <person name="Scott C.E."/>
            <person name="Ainscough R."/>
            <person name="Almeida J.P."/>
            <person name="Ambrose K.D."/>
            <person name="Andrews D.T."/>
            <person name="Ashwell R.I.S."/>
            <person name="Babbage A.K."/>
            <person name="Bagguley C.L."/>
            <person name="Bailey J."/>
            <person name="Bannerjee R."/>
            <person name="Barlow K.F."/>
            <person name="Bates K."/>
            <person name="Beasley H."/>
            <person name="Bird C.P."/>
            <person name="Bray-Allen S."/>
            <person name="Brown A.J."/>
            <person name="Brown J.Y."/>
            <person name="Burrill W."/>
            <person name="Carder C."/>
            <person name="Carter N.P."/>
            <person name="Chapman J.C."/>
            <person name="Clamp M.E."/>
            <person name="Clark S.Y."/>
            <person name="Clarke G."/>
            <person name="Clee C.M."/>
            <person name="Clegg S.C."/>
            <person name="Cobley V."/>
            <person name="Collins J.E."/>
            <person name="Corby N."/>
            <person name="Coville G.J."/>
            <person name="Deloukas P."/>
            <person name="Dhami P."/>
            <person name="Dunham I."/>
            <person name="Dunn M."/>
            <person name="Earthrowl M.E."/>
            <person name="Ellington A.G."/>
            <person name="Faulkner L."/>
            <person name="Frankish A.G."/>
            <person name="Frankland J."/>
            <person name="French L."/>
            <person name="Garner P."/>
            <person name="Garnett J."/>
            <person name="Gilbert J.G.R."/>
            <person name="Gilson C.J."/>
            <person name="Ghori J."/>
            <person name="Grafham D.V."/>
            <person name="Gribble S.M."/>
            <person name="Griffiths C."/>
            <person name="Hall R.E."/>
            <person name="Hammond S."/>
            <person name="Harley J.L."/>
            <person name="Hart E.A."/>
            <person name="Heath P.D."/>
            <person name="Howden P.J."/>
            <person name="Huckle E.J."/>
            <person name="Hunt P.J."/>
            <person name="Hunt A.R."/>
            <person name="Johnson C."/>
            <person name="Johnson D."/>
            <person name="Kay M."/>
            <person name="Kimberley A.M."/>
            <person name="King A."/>
            <person name="Laird G.K."/>
            <person name="Langford C.J."/>
            <person name="Lawlor S."/>
            <person name="Leongamornlert D.A."/>
            <person name="Lloyd D.M."/>
            <person name="Lloyd C."/>
            <person name="Loveland J.E."/>
            <person name="Lovell J."/>
            <person name="Martin S."/>
            <person name="Mashreghi-Mohammadi M."/>
            <person name="McLaren S.J."/>
            <person name="McMurray A."/>
            <person name="Milne S."/>
            <person name="Moore M.J.F."/>
            <person name="Nickerson T."/>
            <person name="Palmer S.A."/>
            <person name="Pearce A.V."/>
            <person name="Peck A.I."/>
            <person name="Pelan S."/>
            <person name="Phillimore B."/>
            <person name="Porter K.M."/>
            <person name="Rice C.M."/>
            <person name="Searle S."/>
            <person name="Sehra H.K."/>
            <person name="Shownkeen R."/>
            <person name="Skuce C.D."/>
            <person name="Smith M."/>
            <person name="Steward C.A."/>
            <person name="Sycamore N."/>
            <person name="Tester J."/>
            <person name="Thomas D.W."/>
            <person name="Tracey A."/>
            <person name="Tromans A."/>
            <person name="Tubby B."/>
            <person name="Wall M."/>
            <person name="Wallis J.M."/>
            <person name="West A.P."/>
            <person name="Whitehead S.L."/>
            <person name="Willey D.L."/>
            <person name="Wilming L."/>
            <person name="Wray P.W."/>
            <person name="Wright M.W."/>
            <person name="Young L."/>
            <person name="Coulson A."/>
            <person name="Durbin R.M."/>
            <person name="Hubbard T."/>
            <person name="Sulston J.E."/>
            <person name="Beck S."/>
            <person name="Bentley D.R."/>
            <person name="Rogers J."/>
            <person name="Ross M.T."/>
        </authorList>
    </citation>
    <scope>NUCLEOTIDE SEQUENCE [LARGE SCALE GENOMIC DNA]</scope>
</reference>
<proteinExistence type="uncertain"/>
<sequence length="138" mass="15541">MPAAFPCVFPPQSLQVFPQMIVKVWEKQSLPLPGLRGSPVERLYLPRNELDNPHKQKAWKIYPPEFAVEILFGMVSVDSLLFVLSSPHWWLHLAQGSFWMSEGGFSLCHPGWSVVAQSLLTSTSAFCVRAILLPQPPE</sequence>
<gene>
    <name type="primary">TPTE2P1</name>
</gene>
<protein>
    <recommendedName>
        <fullName>Putative phosphatidylinositol 3,4,5-trisphosphate 3-phosphatase TPTE2P1</fullName>
    </recommendedName>
</protein>
<accession>Q5T6R2</accession>
<accession>B3KST4</accession>
<accession>B4DMH9</accession>
<dbReference type="EMBL" id="AK094224">
    <property type="protein sequence ID" value="BAG52846.1"/>
    <property type="molecule type" value="mRNA"/>
</dbReference>
<dbReference type="EMBL" id="AK297470">
    <property type="protein sequence ID" value="BAG59891.1"/>
    <property type="molecule type" value="mRNA"/>
</dbReference>
<dbReference type="EMBL" id="AL354798">
    <property type="status" value="NOT_ANNOTATED_CDS"/>
    <property type="molecule type" value="Genomic_DNA"/>
</dbReference>
<dbReference type="SMR" id="Q5T6R2"/>
<dbReference type="BioMuta" id="HGNC:35196"/>
<dbReference type="PeptideAtlas" id="Q5T6R2"/>
<dbReference type="AGR" id="HGNC:35196"/>
<dbReference type="GeneCards" id="TPTE2P1"/>
<dbReference type="HGNC" id="HGNC:35196">
    <property type="gene designation" value="TPTE2P1"/>
</dbReference>
<dbReference type="neXtProt" id="NX_Q5T6R2"/>
<dbReference type="InParanoid" id="Q5T6R2"/>
<dbReference type="PAN-GO" id="Q5T6R2">
    <property type="GO annotations" value="0 GO annotations based on evolutionary models"/>
</dbReference>
<dbReference type="PhylomeDB" id="Q5T6R2"/>
<dbReference type="ChiTaRS" id="TPTE2P1">
    <property type="organism name" value="human"/>
</dbReference>
<dbReference type="Pharos" id="Q5T6R2">
    <property type="development level" value="Tdark"/>
</dbReference>
<dbReference type="Proteomes" id="UP000005640">
    <property type="component" value="Unplaced"/>
</dbReference>
<dbReference type="RNAct" id="Q5T6R2">
    <property type="molecule type" value="protein"/>
</dbReference>
<dbReference type="Gene3D" id="2.60.40.1110">
    <property type="match status" value="1"/>
</dbReference>
<dbReference type="InterPro" id="IPR035892">
    <property type="entry name" value="C2_domain_sf"/>
</dbReference>
<dbReference type="InterPro" id="IPR014020">
    <property type="entry name" value="Tensin_C2-dom"/>
</dbReference>
<dbReference type="Pfam" id="PF10409">
    <property type="entry name" value="PTEN_C2"/>
    <property type="match status" value="1"/>
</dbReference>
<dbReference type="SUPFAM" id="SSF49562">
    <property type="entry name" value="C2 domain (Calcium/lipid-binding domain, CaLB)"/>
    <property type="match status" value="1"/>
</dbReference>
<dbReference type="PROSITE" id="PS51182">
    <property type="entry name" value="C2_TENSIN"/>
    <property type="match status" value="1"/>
</dbReference>